<organism>
    <name type="scientific">Mycobacterium tuberculosis (strain ATCC 25618 / H37Rv)</name>
    <dbReference type="NCBI Taxonomy" id="83332"/>
    <lineage>
        <taxon>Bacteria</taxon>
        <taxon>Bacillati</taxon>
        <taxon>Actinomycetota</taxon>
        <taxon>Actinomycetes</taxon>
        <taxon>Mycobacteriales</taxon>
        <taxon>Mycobacteriaceae</taxon>
        <taxon>Mycobacterium</taxon>
        <taxon>Mycobacterium tuberculosis complex</taxon>
    </lineage>
</organism>
<reference key="1">
    <citation type="journal article" date="1998" name="Nature">
        <title>Deciphering the biology of Mycobacterium tuberculosis from the complete genome sequence.</title>
        <authorList>
            <person name="Cole S.T."/>
            <person name="Brosch R."/>
            <person name="Parkhill J."/>
            <person name="Garnier T."/>
            <person name="Churcher C.M."/>
            <person name="Harris D.E."/>
            <person name="Gordon S.V."/>
            <person name="Eiglmeier K."/>
            <person name="Gas S."/>
            <person name="Barry C.E. III"/>
            <person name="Tekaia F."/>
            <person name="Badcock K."/>
            <person name="Basham D."/>
            <person name="Brown D."/>
            <person name="Chillingworth T."/>
            <person name="Connor R."/>
            <person name="Davies R.M."/>
            <person name="Devlin K."/>
            <person name="Feltwell T."/>
            <person name="Gentles S."/>
            <person name="Hamlin N."/>
            <person name="Holroyd S."/>
            <person name="Hornsby T."/>
            <person name="Jagels K."/>
            <person name="Krogh A."/>
            <person name="McLean J."/>
            <person name="Moule S."/>
            <person name="Murphy L.D."/>
            <person name="Oliver S."/>
            <person name="Osborne J."/>
            <person name="Quail M.A."/>
            <person name="Rajandream M.A."/>
            <person name="Rogers J."/>
            <person name="Rutter S."/>
            <person name="Seeger K."/>
            <person name="Skelton S."/>
            <person name="Squares S."/>
            <person name="Squares R."/>
            <person name="Sulston J.E."/>
            <person name="Taylor K."/>
            <person name="Whitehead S."/>
            <person name="Barrell B.G."/>
        </authorList>
    </citation>
    <scope>NUCLEOTIDE SEQUENCE [LARGE SCALE GENOMIC DNA]</scope>
    <source>
        <strain>ATCC 25618 / H37Rv</strain>
    </source>
</reference>
<evidence type="ECO:0000255" key="1">
    <source>
        <dbReference type="PROSITE-ProRule" id="PRU01251"/>
    </source>
</evidence>
<evidence type="ECO:0000305" key="2"/>
<evidence type="ECO:0007829" key="3">
    <source>
        <dbReference type="PDB" id="8AD9"/>
    </source>
</evidence>
<evidence type="ECO:0007829" key="4">
    <source>
        <dbReference type="PDB" id="8ADA"/>
    </source>
</evidence>
<accession>P9WPC7</accession>
<accession>L0TAA6</accession>
<accession>P0A524</accession>
<accession>P71964</accession>
<sequence>MPEPTPTAYPVRLDELINAIKRVHSDVLDQLSDAVLAAEHLGEIADHLIGHFVDQARRSGASWSDIGKSMGVTKQAAQKRFVPRAEATTLDSNQGFRRFTPRARNAVVAAQNAAHGAASSEITPDHLLLGVLTDPAALATALLQQQEIDIATLRTAVTLPPAVTEPPQPIPFSGPARKVLELTFREALRLGHNYIGTEHLLLALLELEDGDGPLHRSGVDKSRAEADLITTLASLTGANAAGATDAGATDAG</sequence>
<dbReference type="EMBL" id="AL123456">
    <property type="protein sequence ID" value="CCP45465.1"/>
    <property type="molecule type" value="Genomic_DNA"/>
</dbReference>
<dbReference type="PIR" id="G70967">
    <property type="entry name" value="G70967"/>
</dbReference>
<dbReference type="RefSeq" id="WP_003413845.1">
    <property type="nucleotide sequence ID" value="NZ_NVQJ01000017.1"/>
</dbReference>
<dbReference type="PDB" id="8AD9">
    <property type="method" value="X-ray"/>
    <property type="resolution" value="1.43 A"/>
    <property type="chains" value="A/B=94-252"/>
</dbReference>
<dbReference type="PDB" id="8ADA">
    <property type="method" value="X-ray"/>
    <property type="resolution" value="2.00 A"/>
    <property type="chains" value="A/B=1-72"/>
</dbReference>
<dbReference type="PDBsum" id="8AD9"/>
<dbReference type="PDBsum" id="8ADA"/>
<dbReference type="SMR" id="P9WPC7"/>
<dbReference type="STRING" id="83332.Rv2667"/>
<dbReference type="PaxDb" id="83332-Rv2667"/>
<dbReference type="DNASU" id="887415"/>
<dbReference type="KEGG" id="mtu:Rv2667"/>
<dbReference type="KEGG" id="mtv:RVBD_2667"/>
<dbReference type="TubercuList" id="Rv2667"/>
<dbReference type="eggNOG" id="COG0542">
    <property type="taxonomic scope" value="Bacteria"/>
</dbReference>
<dbReference type="InParanoid" id="P9WPC7"/>
<dbReference type="OrthoDB" id="3290891at2"/>
<dbReference type="Proteomes" id="UP000001584">
    <property type="component" value="Chromosome"/>
</dbReference>
<dbReference type="GO" id="GO:0005829">
    <property type="term" value="C:cytosol"/>
    <property type="evidence" value="ECO:0007005"/>
    <property type="project" value="MTBBASE"/>
</dbReference>
<dbReference type="Gene3D" id="1.10.1780.10">
    <property type="entry name" value="Clp, N-terminal domain"/>
    <property type="match status" value="1"/>
</dbReference>
<dbReference type="InterPro" id="IPR036628">
    <property type="entry name" value="Clp_N_dom_sf"/>
</dbReference>
<dbReference type="InterPro" id="IPR004176">
    <property type="entry name" value="Clp_R_dom"/>
</dbReference>
<dbReference type="Pfam" id="PF02861">
    <property type="entry name" value="Clp_N"/>
    <property type="match status" value="2"/>
</dbReference>
<dbReference type="SUPFAM" id="SSF81923">
    <property type="entry name" value="Double Clp-N motif"/>
    <property type="match status" value="1"/>
</dbReference>
<dbReference type="PROSITE" id="PS51903">
    <property type="entry name" value="CLP_R"/>
    <property type="match status" value="1"/>
</dbReference>
<protein>
    <recommendedName>
        <fullName>Uncharacterized protein Rv2667</fullName>
    </recommendedName>
</protein>
<keyword id="KW-0002">3D-structure</keyword>
<keyword id="KW-1185">Reference proteome</keyword>
<keyword id="KW-0677">Repeat</keyword>
<gene>
    <name type="ordered locus">Rv2667</name>
    <name type="ORF">MTCY441.36</name>
</gene>
<proteinExistence type="evidence at protein level"/>
<name>Y2667_MYCTU</name>
<comment type="similarity">
    <text evidence="2">Belongs to the ClpA/ClpB family. ClpC subfamily.</text>
</comment>
<feature type="chain" id="PRO_0000191238" description="Uncharacterized protein Rv2667">
    <location>
        <begin position="1"/>
        <end position="252"/>
    </location>
</feature>
<feature type="domain" description="Clp R" evidence="1">
    <location>
        <begin position="96"/>
        <end position="238"/>
    </location>
</feature>
<feature type="region of interest" description="Repeat 1" evidence="1">
    <location>
        <begin position="99"/>
        <end position="164"/>
    </location>
</feature>
<feature type="region of interest" description="Repeat 2" evidence="1">
    <location>
        <begin position="172"/>
        <end position="238"/>
    </location>
</feature>
<feature type="helix" evidence="4">
    <location>
        <begin position="13"/>
        <end position="22"/>
    </location>
</feature>
<feature type="helix" evidence="4">
    <location>
        <begin position="27"/>
        <end position="38"/>
    </location>
</feature>
<feature type="helix" evidence="4">
    <location>
        <begin position="44"/>
        <end position="58"/>
    </location>
</feature>
<feature type="helix" evidence="4">
    <location>
        <begin position="63"/>
        <end position="70"/>
    </location>
</feature>
<feature type="helix" evidence="3">
    <location>
        <begin position="96"/>
        <end position="98"/>
    </location>
</feature>
<feature type="helix" evidence="3">
    <location>
        <begin position="101"/>
        <end position="116"/>
    </location>
</feature>
<feature type="strand" evidence="3">
    <location>
        <begin position="120"/>
        <end position="122"/>
    </location>
</feature>
<feature type="helix" evidence="3">
    <location>
        <begin position="124"/>
        <end position="132"/>
    </location>
</feature>
<feature type="helix" evidence="3">
    <location>
        <begin position="138"/>
        <end position="145"/>
    </location>
</feature>
<feature type="helix" evidence="3">
    <location>
        <begin position="150"/>
        <end position="156"/>
    </location>
</feature>
<feature type="helix" evidence="3">
    <location>
        <begin position="174"/>
        <end position="189"/>
    </location>
</feature>
<feature type="strand" evidence="3">
    <location>
        <begin position="193"/>
        <end position="195"/>
    </location>
</feature>
<feature type="helix" evidence="3">
    <location>
        <begin position="197"/>
        <end position="207"/>
    </location>
</feature>
<feature type="helix" evidence="3">
    <location>
        <begin position="213"/>
        <end position="216"/>
    </location>
</feature>
<feature type="helix" evidence="3">
    <location>
        <begin position="221"/>
        <end position="229"/>
    </location>
</feature>
<feature type="turn" evidence="3">
    <location>
        <begin position="230"/>
        <end position="232"/>
    </location>
</feature>
<feature type="strand" evidence="3">
    <location>
        <begin position="237"/>
        <end position="239"/>
    </location>
</feature>